<gene>
    <name type="primary">MED7</name>
    <name type="ordered locus">YOL135C</name>
</gene>
<accession>Q08278</accession>
<accession>D6W1T4</accession>
<comment type="function">
    <text evidence="2 6 7">Component of the Mediator complex, a coactivator involved in the regulated transcription of nearly all RNA polymerase II-dependent genes. Mediator functions as a bridge to convey information from gene-specific regulatory proteins to the basal RNA polymerase II transcription machinery. The Mediator complex, having a compact conformation in its free form, is recruited to promoters by direct interactions with regulatory proteins and serves for the assembly of a functional preinitiation complex with RNA polymerase II and the general transcription factors. The Mediator complex unfolds to an extended conformation and partially surrounds RNA polymerase II, specifically interacting with the unphosphorylated form of the C-terminal domain (CTD) of RNA polymerase II. The Mediator complex dissociates from the RNA polymerase II holoenzyme and stays at the promoter when transcriptional elongation begins.</text>
</comment>
<comment type="subunit">
    <text evidence="2 5 9">Component of the Mediator complex, which is composed of at least 21 subunits that form three structurally distinct submodules. The Mediator head module contains MED6, MED8, MED11, SRB4/MED17, SRB5/MED18, ROX3/MED19, SRB2/MED20 and SRB6/MED22, the middle module contains MED1, MED4, NUT1/MED5, MED7, CSE2/MED9, NUT2/MED10, SRB7/MED21 and SOH1/MED31, and the tail module contains MED2, PGD1/MED3, RGR1/MED14, GAL11/MED15 and SIN4/MED16. The head and the middle modules interact directly with RNA polymerase II, whereas the elongated tail module interacts with gene-specific regulatory proteins. MED7 interacts directly with MED1, MED4 and SRB7/MED21.</text>
</comment>
<comment type="interaction">
    <interactant intactId="EBI-10674">
        <id>Q08278</id>
    </interactant>
    <interactant intactId="EBI-5174">
        <id>P33308</id>
        <label>CSE2</label>
    </interactant>
    <organismsDiffer>false</organismsDiffer>
    <experiments>3</experiments>
</comment>
<comment type="interaction">
    <interactant intactId="EBI-10674">
        <id>Q08278</id>
    </interactant>
    <interactant intactId="EBI-32854">
        <id>Q12321</id>
        <label>MED1</label>
    </interactant>
    <organismsDiffer>false</organismsDiffer>
    <experiments>4</experiments>
</comment>
<comment type="interaction">
    <interactant intactId="EBI-10674">
        <id>Q08278</id>
    </interactant>
    <interactant intactId="EBI-31503">
        <id>Q12343</id>
        <label>MED4</label>
    </interactant>
    <organismsDiffer>false</organismsDiffer>
    <experiments>5</experiments>
</comment>
<comment type="interaction">
    <interactant intactId="EBI-10674">
        <id>Q08278</id>
    </interactant>
    <interactant intactId="EBI-12414">
        <id>Q06213</id>
        <label>NUT2</label>
    </interactant>
    <organismsDiffer>false</organismsDiffer>
    <experiments>7</experiments>
</comment>
<comment type="interaction">
    <interactant intactId="EBI-10674">
        <id>Q08278</id>
    </interactant>
    <interactant intactId="EBI-18046">
        <id>P47822</id>
        <label>SRB7</label>
    </interactant>
    <organismsDiffer>false</organismsDiffer>
    <experiments>6</experiments>
</comment>
<comment type="subcellular location">
    <subcellularLocation>
        <location evidence="3 8">Nucleus</location>
    </subcellularLocation>
</comment>
<comment type="miscellaneous">
    <text evidence="4">Present with 7598 molecules/cell in log phase SD medium.</text>
</comment>
<comment type="similarity">
    <text evidence="10">Belongs to the Mediator complex subunit 7 family.</text>
</comment>
<keyword id="KW-0002">3D-structure</keyword>
<keyword id="KW-0010">Activator</keyword>
<keyword id="KW-0539">Nucleus</keyword>
<keyword id="KW-1185">Reference proteome</keyword>
<keyword id="KW-0804">Transcription</keyword>
<keyword id="KW-0805">Transcription regulation</keyword>
<protein>
    <recommendedName>
        <fullName>Mediator of RNA polymerase II transcription subunit 7</fullName>
    </recommendedName>
    <alternativeName>
        <fullName>Mediator complex subunit 7</fullName>
    </alternativeName>
</protein>
<dbReference type="EMBL" id="X95465">
    <property type="protein sequence ID" value="CAA64734.1"/>
    <property type="molecule type" value="Genomic_DNA"/>
</dbReference>
<dbReference type="EMBL" id="Z74877">
    <property type="protein sequence ID" value="CAA99156.1"/>
    <property type="molecule type" value="Genomic_DNA"/>
</dbReference>
<dbReference type="EMBL" id="AY692889">
    <property type="protein sequence ID" value="AAT92908.1"/>
    <property type="molecule type" value="Genomic_DNA"/>
</dbReference>
<dbReference type="EMBL" id="BK006948">
    <property type="protein sequence ID" value="DAA10650.1"/>
    <property type="molecule type" value="Genomic_DNA"/>
</dbReference>
<dbReference type="PIR" id="S66832">
    <property type="entry name" value="S66832"/>
</dbReference>
<dbReference type="RefSeq" id="NP_014506.1">
    <property type="nucleotide sequence ID" value="NM_001183389.1"/>
</dbReference>
<dbReference type="PDB" id="1YKE">
    <property type="method" value="X-ray"/>
    <property type="resolution" value="3.30 A"/>
    <property type="chains" value="A/C=102-205"/>
</dbReference>
<dbReference type="PDB" id="1YKH">
    <property type="method" value="X-ray"/>
    <property type="resolution" value="3.00 A"/>
    <property type="chains" value="A=102-205"/>
</dbReference>
<dbReference type="PDB" id="3FBI">
    <property type="method" value="X-ray"/>
    <property type="resolution" value="2.80 A"/>
    <property type="chains" value="A/C=2-83"/>
</dbReference>
<dbReference type="PDB" id="3FBN">
    <property type="method" value="X-ray"/>
    <property type="resolution" value="3.01 A"/>
    <property type="chains" value="A/C=2-83"/>
</dbReference>
<dbReference type="PDB" id="5OQM">
    <property type="method" value="EM"/>
    <property type="resolution" value="5.80 A"/>
    <property type="chains" value="i=1-222"/>
</dbReference>
<dbReference type="PDB" id="5SVA">
    <property type="method" value="EM"/>
    <property type="resolution" value="15.30 A"/>
    <property type="chains" value="U=1-222"/>
</dbReference>
<dbReference type="PDB" id="7UI9">
    <property type="method" value="EM"/>
    <property type="resolution" value="3.30 A"/>
    <property type="chains" value="g=1-222"/>
</dbReference>
<dbReference type="PDB" id="7UIF">
    <property type="method" value="EM"/>
    <property type="resolution" value="4.60 A"/>
    <property type="chains" value="g=1-222"/>
</dbReference>
<dbReference type="PDB" id="7UIG">
    <property type="method" value="EM"/>
    <property type="resolution" value="4.30 A"/>
    <property type="chains" value="g=1-222"/>
</dbReference>
<dbReference type="PDB" id="7UIO">
    <property type="method" value="EM"/>
    <property type="resolution" value="3.30 A"/>
    <property type="chains" value="Ag/Bg=1-222"/>
</dbReference>
<dbReference type="PDB" id="8CEN">
    <property type="method" value="EM"/>
    <property type="resolution" value="3.00 A"/>
    <property type="chains" value="i=1-222"/>
</dbReference>
<dbReference type="PDB" id="8CEO">
    <property type="method" value="EM"/>
    <property type="resolution" value="3.60 A"/>
    <property type="chains" value="i=1-222"/>
</dbReference>
<dbReference type="PDBsum" id="1YKE"/>
<dbReference type="PDBsum" id="1YKH"/>
<dbReference type="PDBsum" id="3FBI"/>
<dbReference type="PDBsum" id="3FBN"/>
<dbReference type="PDBsum" id="5OQM"/>
<dbReference type="PDBsum" id="5SVA"/>
<dbReference type="PDBsum" id="7UI9"/>
<dbReference type="PDBsum" id="7UIF"/>
<dbReference type="PDBsum" id="7UIG"/>
<dbReference type="PDBsum" id="7UIO"/>
<dbReference type="PDBsum" id="8CEN"/>
<dbReference type="PDBsum" id="8CEO"/>
<dbReference type="EMDB" id="EMD-26542"/>
<dbReference type="EMDB" id="EMD-26544"/>
<dbReference type="EMDB" id="EMD-26545"/>
<dbReference type="EMDB" id="EMD-26551"/>
<dbReference type="EMDB" id="EMD-2786"/>
<dbReference type="EMDB" id="EMD-3850"/>
<dbReference type="SMR" id="Q08278"/>
<dbReference type="BioGRID" id="34241">
    <property type="interactions" value="505"/>
</dbReference>
<dbReference type="ComplexPortal" id="CPX-3226">
    <property type="entry name" value="Core mediator complex"/>
</dbReference>
<dbReference type="DIP" id="DIP-1435N"/>
<dbReference type="FunCoup" id="Q08278">
    <property type="interactions" value="896"/>
</dbReference>
<dbReference type="IntAct" id="Q08278">
    <property type="interactions" value="50"/>
</dbReference>
<dbReference type="MINT" id="Q08278"/>
<dbReference type="STRING" id="4932.YOL135C"/>
<dbReference type="iPTMnet" id="Q08278"/>
<dbReference type="PaxDb" id="4932-YOL135C"/>
<dbReference type="PeptideAtlas" id="Q08278"/>
<dbReference type="EnsemblFungi" id="YOL135C_mRNA">
    <property type="protein sequence ID" value="YOL135C"/>
    <property type="gene ID" value="YOL135C"/>
</dbReference>
<dbReference type="GeneID" id="853985"/>
<dbReference type="KEGG" id="sce:YOL135C"/>
<dbReference type="AGR" id="SGD:S000005495"/>
<dbReference type="SGD" id="S000005495">
    <property type="gene designation" value="MED7"/>
</dbReference>
<dbReference type="VEuPathDB" id="FungiDB:YOL135C"/>
<dbReference type="eggNOG" id="KOG0570">
    <property type="taxonomic scope" value="Eukaryota"/>
</dbReference>
<dbReference type="GeneTree" id="ENSGT00940000165241"/>
<dbReference type="HOGENOM" id="CLU_065214_0_1_1"/>
<dbReference type="InParanoid" id="Q08278"/>
<dbReference type="OMA" id="IHDSYSM"/>
<dbReference type="OrthoDB" id="10253553at2759"/>
<dbReference type="BioCyc" id="YEAST:G3O-33529-MONOMER"/>
<dbReference type="BioGRID-ORCS" id="853985">
    <property type="hits" value="10 hits in 10 CRISPR screens"/>
</dbReference>
<dbReference type="EvolutionaryTrace" id="Q08278"/>
<dbReference type="PRO" id="PR:Q08278"/>
<dbReference type="Proteomes" id="UP000002311">
    <property type="component" value="Chromosome XV"/>
</dbReference>
<dbReference type="RNAct" id="Q08278">
    <property type="molecule type" value="protein"/>
</dbReference>
<dbReference type="GO" id="GO:0070847">
    <property type="term" value="C:core mediator complex"/>
    <property type="evidence" value="ECO:0000314"/>
    <property type="project" value="SGD"/>
</dbReference>
<dbReference type="GO" id="GO:0016592">
    <property type="term" value="C:mediator complex"/>
    <property type="evidence" value="ECO:0000318"/>
    <property type="project" value="GO_Central"/>
</dbReference>
<dbReference type="GO" id="GO:0005634">
    <property type="term" value="C:nucleus"/>
    <property type="evidence" value="ECO:0000314"/>
    <property type="project" value="ComplexPortal"/>
</dbReference>
<dbReference type="GO" id="GO:0003713">
    <property type="term" value="F:transcription coactivator activity"/>
    <property type="evidence" value="ECO:0000314"/>
    <property type="project" value="SGD"/>
</dbReference>
<dbReference type="GO" id="GO:0000122">
    <property type="term" value="P:negative regulation of transcription by RNA polymerase II"/>
    <property type="evidence" value="ECO:0000315"/>
    <property type="project" value="SGD"/>
</dbReference>
<dbReference type="GO" id="GO:0045944">
    <property type="term" value="P:positive regulation of transcription by RNA polymerase II"/>
    <property type="evidence" value="ECO:0000315"/>
    <property type="project" value="SGD"/>
</dbReference>
<dbReference type="GO" id="GO:0032968">
    <property type="term" value="P:positive regulation of transcription elongation by RNA polymerase II"/>
    <property type="evidence" value="ECO:0000314"/>
    <property type="project" value="ComplexPortal"/>
</dbReference>
<dbReference type="GO" id="GO:0060261">
    <property type="term" value="P:positive regulation of transcription initiation by RNA polymerase II"/>
    <property type="evidence" value="ECO:0000314"/>
    <property type="project" value="ComplexPortal"/>
</dbReference>
<dbReference type="GO" id="GO:0006357">
    <property type="term" value="P:regulation of transcription by RNA polymerase II"/>
    <property type="evidence" value="ECO:0000318"/>
    <property type="project" value="GO_Central"/>
</dbReference>
<dbReference type="GO" id="GO:0051123">
    <property type="term" value="P:RNA polymerase II preinitiation complex assembly"/>
    <property type="evidence" value="ECO:0000314"/>
    <property type="project" value="ComplexPortal"/>
</dbReference>
<dbReference type="Gene3D" id="6.10.140.1520">
    <property type="match status" value="1"/>
</dbReference>
<dbReference type="Gene3D" id="6.10.140.200">
    <property type="match status" value="1"/>
</dbReference>
<dbReference type="InterPro" id="IPR037212">
    <property type="entry name" value="Med7/Med21-like"/>
</dbReference>
<dbReference type="InterPro" id="IPR009244">
    <property type="entry name" value="Mediatior_Med7"/>
</dbReference>
<dbReference type="InterPro" id="IPR044888">
    <property type="entry name" value="Mediatior_Med7_sf"/>
</dbReference>
<dbReference type="PANTHER" id="PTHR21428">
    <property type="entry name" value="MEDIATOR OF RNA POLYMERASE II TRANSCRIPTION SUBUNIT 7"/>
    <property type="match status" value="1"/>
</dbReference>
<dbReference type="PANTHER" id="PTHR21428:SF11">
    <property type="entry name" value="MEDIATOR OF RNA POLYMERASE II TRANSCRIPTION SUBUNIT 7"/>
    <property type="match status" value="1"/>
</dbReference>
<dbReference type="Pfam" id="PF05983">
    <property type="entry name" value="Med7"/>
    <property type="match status" value="1"/>
</dbReference>
<dbReference type="SUPFAM" id="SSF140718">
    <property type="entry name" value="Mediator hinge subcomplex-like"/>
    <property type="match status" value="1"/>
</dbReference>
<evidence type="ECO:0000256" key="1">
    <source>
        <dbReference type="SAM" id="MobiDB-lite"/>
    </source>
</evidence>
<evidence type="ECO:0000269" key="2">
    <source>
    </source>
</evidence>
<evidence type="ECO:0000269" key="3">
    <source>
    </source>
</evidence>
<evidence type="ECO:0000269" key="4">
    <source>
    </source>
</evidence>
<evidence type="ECO:0000269" key="5">
    <source>
    </source>
</evidence>
<evidence type="ECO:0000269" key="6">
    <source>
    </source>
</evidence>
<evidence type="ECO:0000269" key="7">
    <source>
    </source>
</evidence>
<evidence type="ECO:0000269" key="8">
    <source>
    </source>
</evidence>
<evidence type="ECO:0000269" key="9">
    <source>
    </source>
</evidence>
<evidence type="ECO:0000305" key="10"/>
<evidence type="ECO:0007829" key="11">
    <source>
        <dbReference type="PDB" id="1YKH"/>
    </source>
</evidence>
<evidence type="ECO:0007829" key="12">
    <source>
        <dbReference type="PDB" id="3FBI"/>
    </source>
</evidence>
<sequence>MSNDPGNEVSSLYPPPPPYVKFFTQSNLEKLPKYKEKKAASAKQTAPNNSNGGSEEEITCALDYLIPPPMPKNQQYRAFGSIWQVKDQLPDLESMGLTQLYKKSTENESTNYQYKIQELRKLLKSLLLNYLELIGVLSINPDMYERKVENIRTILVNIHHLLNEYRPHQSRESLIMLLEEQLEYKRGEIREIEQVCKQVHDKLTSIQDTLRTGSQSPPSSSQ</sequence>
<proteinExistence type="evidence at protein level"/>
<name>MED7_YEAST</name>
<reference key="1">
    <citation type="journal article" date="1996" name="Yeast">
        <title>Sequence analysis of a 12 801 bp fragment of the left arm of yeast chromosome XV containing a putative 6-phosphofructo-2-kinase gene, a gene for a possible glycophospholipid-anchored surface protein and six other open reading frames.</title>
        <authorList>
            <person name="Aldea M."/>
            <person name="Piedrafita L."/>
            <person name="Casas C."/>
            <person name="Casamayor A."/>
            <person name="Khalid H."/>
            <person name="Balcells L."/>
            <person name="Arino J."/>
            <person name="Herrero E."/>
        </authorList>
    </citation>
    <scope>NUCLEOTIDE SEQUENCE [GENOMIC DNA]</scope>
    <source>
        <strain>ATCC 96604 / S288c / FY1679</strain>
    </source>
</reference>
<reference key="2">
    <citation type="journal article" date="1997" name="Nature">
        <title>The nucleotide sequence of Saccharomyces cerevisiae chromosome XV.</title>
        <authorList>
            <person name="Dujon B."/>
            <person name="Albermann K."/>
            <person name="Aldea M."/>
            <person name="Alexandraki D."/>
            <person name="Ansorge W."/>
            <person name="Arino J."/>
            <person name="Benes V."/>
            <person name="Bohn C."/>
            <person name="Bolotin-Fukuhara M."/>
            <person name="Bordonne R."/>
            <person name="Boyer J."/>
            <person name="Camasses A."/>
            <person name="Casamayor A."/>
            <person name="Casas C."/>
            <person name="Cheret G."/>
            <person name="Cziepluch C."/>
            <person name="Daignan-Fornier B."/>
            <person name="Dang V.-D."/>
            <person name="de Haan M."/>
            <person name="Delius H."/>
            <person name="Durand P."/>
            <person name="Fairhead C."/>
            <person name="Feldmann H."/>
            <person name="Gaillon L."/>
            <person name="Galisson F."/>
            <person name="Gamo F.-J."/>
            <person name="Gancedo C."/>
            <person name="Goffeau A."/>
            <person name="Goulding S.E."/>
            <person name="Grivell L.A."/>
            <person name="Habbig B."/>
            <person name="Hand N.J."/>
            <person name="Hani J."/>
            <person name="Hattenhorst U."/>
            <person name="Hebling U."/>
            <person name="Hernando Y."/>
            <person name="Herrero E."/>
            <person name="Heumann K."/>
            <person name="Hiesel R."/>
            <person name="Hilger F."/>
            <person name="Hofmann B."/>
            <person name="Hollenberg C.P."/>
            <person name="Hughes B."/>
            <person name="Jauniaux J.-C."/>
            <person name="Kalogeropoulos A."/>
            <person name="Katsoulou C."/>
            <person name="Kordes E."/>
            <person name="Lafuente M.J."/>
            <person name="Landt O."/>
            <person name="Louis E.J."/>
            <person name="Maarse A.C."/>
            <person name="Madania A."/>
            <person name="Mannhaupt G."/>
            <person name="Marck C."/>
            <person name="Martin R.P."/>
            <person name="Mewes H.-W."/>
            <person name="Michaux G."/>
            <person name="Paces V."/>
            <person name="Parle-McDermott A.G."/>
            <person name="Pearson B.M."/>
            <person name="Perrin A."/>
            <person name="Pettersson B."/>
            <person name="Poch O."/>
            <person name="Pohl T.M."/>
            <person name="Poirey R."/>
            <person name="Portetelle D."/>
            <person name="Pujol A."/>
            <person name="Purnelle B."/>
            <person name="Ramezani Rad M."/>
            <person name="Rechmann S."/>
            <person name="Schwager C."/>
            <person name="Schweizer M."/>
            <person name="Sor F."/>
            <person name="Sterky F."/>
            <person name="Tarassov I.A."/>
            <person name="Teodoru C."/>
            <person name="Tettelin H."/>
            <person name="Thierry A."/>
            <person name="Tobiasch E."/>
            <person name="Tzermia M."/>
            <person name="Uhlen M."/>
            <person name="Unseld M."/>
            <person name="Valens M."/>
            <person name="Vandenbol M."/>
            <person name="Vetter I."/>
            <person name="Vlcek C."/>
            <person name="Voet M."/>
            <person name="Volckaert G."/>
            <person name="Voss H."/>
            <person name="Wambutt R."/>
            <person name="Wedler H."/>
            <person name="Wiemann S."/>
            <person name="Winsor B."/>
            <person name="Wolfe K.H."/>
            <person name="Zollner A."/>
            <person name="Zumstein E."/>
            <person name="Kleine K."/>
        </authorList>
    </citation>
    <scope>NUCLEOTIDE SEQUENCE [LARGE SCALE GENOMIC DNA]</scope>
    <source>
        <strain>ATCC 204508 / S288c</strain>
    </source>
</reference>
<reference key="3">
    <citation type="journal article" date="2014" name="G3 (Bethesda)">
        <title>The reference genome sequence of Saccharomyces cerevisiae: Then and now.</title>
        <authorList>
            <person name="Engel S.R."/>
            <person name="Dietrich F.S."/>
            <person name="Fisk D.G."/>
            <person name="Binkley G."/>
            <person name="Balakrishnan R."/>
            <person name="Costanzo M.C."/>
            <person name="Dwight S.S."/>
            <person name="Hitz B.C."/>
            <person name="Karra K."/>
            <person name="Nash R.S."/>
            <person name="Weng S."/>
            <person name="Wong E.D."/>
            <person name="Lloyd P."/>
            <person name="Skrzypek M.S."/>
            <person name="Miyasato S.R."/>
            <person name="Simison M."/>
            <person name="Cherry J.M."/>
        </authorList>
    </citation>
    <scope>GENOME REANNOTATION</scope>
    <source>
        <strain>ATCC 204508 / S288c</strain>
    </source>
</reference>
<reference key="4">
    <citation type="journal article" date="2007" name="Genome Res.">
        <title>Approaching a complete repository of sequence-verified protein-encoding clones for Saccharomyces cerevisiae.</title>
        <authorList>
            <person name="Hu Y."/>
            <person name="Rolfs A."/>
            <person name="Bhullar B."/>
            <person name="Murthy T.V.S."/>
            <person name="Zhu C."/>
            <person name="Berger M.F."/>
            <person name="Camargo A.A."/>
            <person name="Kelley F."/>
            <person name="McCarron S."/>
            <person name="Jepson D."/>
            <person name="Richardson A."/>
            <person name="Raphael J."/>
            <person name="Moreira D."/>
            <person name="Taycher E."/>
            <person name="Zuo D."/>
            <person name="Mohr S."/>
            <person name="Kane M.F."/>
            <person name="Williamson J."/>
            <person name="Simpson A.J.G."/>
            <person name="Bulyk M.L."/>
            <person name="Harlow E."/>
            <person name="Marsischky G."/>
            <person name="Kolodner R.D."/>
            <person name="LaBaer J."/>
        </authorList>
    </citation>
    <scope>NUCLEOTIDE SEQUENCE [GENOMIC DNA]</scope>
    <source>
        <strain>ATCC 204508 / S288c</strain>
    </source>
</reference>
<reference key="5">
    <citation type="journal article" date="1998" name="Genes Dev.">
        <title>The Med proteins of yeast and their function through the RNA polymerase II carboxy-terminal domain.</title>
        <authorList>
            <person name="Myers L.C."/>
            <person name="Gustafsson C.M."/>
            <person name="Bushnell D.A."/>
            <person name="Lui M."/>
            <person name="Erdjument-Bromage H."/>
            <person name="Tempst P."/>
            <person name="Kornberg R.D."/>
        </authorList>
    </citation>
    <scope>IDENTIFICATION BY MASS SPECTROMETRY</scope>
    <scope>COMPONENT OF MEDIATOR COMPLEX</scope>
</reference>
<reference key="6">
    <citation type="journal article" date="2001" name="J. Biol. Chem.">
        <title>The structural and functional organization of the yeast mediator complex.</title>
        <authorList>
            <person name="Kang J.S."/>
            <person name="Kim S.H."/>
            <person name="Hwang M.S."/>
            <person name="Han S.J."/>
            <person name="Lee Y.C."/>
            <person name="Kim Y.-J."/>
        </authorList>
    </citation>
    <scope>INTERACTION WITH MED1; MED4 AND SRB7</scope>
    <scope>FUNCTION OF THE MEDIATOR COMPLEX</scope>
    <scope>INTERACTION OF THE MEDIATOR COMPLEX WITH RNA POLYMERASE II</scope>
</reference>
<reference key="7">
    <citation type="journal article" date="2003" name="Nature">
        <title>Global analysis of protein localization in budding yeast.</title>
        <authorList>
            <person name="Huh W.-K."/>
            <person name="Falvo J.V."/>
            <person name="Gerke L.C."/>
            <person name="Carroll A.S."/>
            <person name="Howson R.W."/>
            <person name="Weissman J.S."/>
            <person name="O'Shea E.K."/>
        </authorList>
    </citation>
    <scope>SUBCELLULAR LOCATION [LARGE SCALE ANALYSIS]</scope>
</reference>
<reference key="8">
    <citation type="journal article" date="2003" name="Nature">
        <title>Global analysis of protein expression in yeast.</title>
        <authorList>
            <person name="Ghaemmaghami S."/>
            <person name="Huh W.-K."/>
            <person name="Bower K."/>
            <person name="Howson R.W."/>
            <person name="Belle A."/>
            <person name="Dephoure N."/>
            <person name="O'Shea E.K."/>
            <person name="Weissman J.S."/>
        </authorList>
    </citation>
    <scope>LEVEL OF PROTEIN EXPRESSION [LARGE SCALE ANALYSIS]</scope>
</reference>
<reference key="9">
    <citation type="journal article" date="2003" name="Proc. Natl. Acad. Sci. U.S.A.">
        <title>Association of the Mediator complex with enhancers of active genes.</title>
        <authorList>
            <person name="Kuras L."/>
            <person name="Borggrefe T."/>
            <person name="Kornberg R.D."/>
        </authorList>
    </citation>
    <scope>ASSOCIATION WITH PROMOTER REGIONS</scope>
</reference>
<reference key="10">
    <citation type="journal article" date="2004" name="Mol. Cell">
        <title>A unified nomenclature for protein subunits of mediator complexes linking transcriptional regulators to RNA polymerase II.</title>
        <authorList>
            <person name="Bourbon H.-M."/>
            <person name="Aguilera A."/>
            <person name="Ansari A.Z."/>
            <person name="Asturias F.J."/>
            <person name="Berk A.J."/>
            <person name="Bjoerklund S."/>
            <person name="Blackwell T.K."/>
            <person name="Borggrefe T."/>
            <person name="Carey M."/>
            <person name="Carlson M."/>
            <person name="Conaway J.W."/>
            <person name="Conaway R.C."/>
            <person name="Emmons S.W."/>
            <person name="Fondell J.D."/>
            <person name="Freedman L.P."/>
            <person name="Fukasawa T."/>
            <person name="Gustafsson C.M."/>
            <person name="Han M."/>
            <person name="He X."/>
            <person name="Herman P.K."/>
            <person name="Hinnebusch A.G."/>
            <person name="Holmberg S."/>
            <person name="Holstege F.C.P."/>
            <person name="Jaehning J.A."/>
            <person name="Kim Y.-J."/>
            <person name="Kuras L."/>
            <person name="Leutz A."/>
            <person name="Lis J.T."/>
            <person name="Meisterernest M."/>
            <person name="Naeaer A.M."/>
            <person name="Nasmyth K."/>
            <person name="Parvin J.D."/>
            <person name="Ptashne M."/>
            <person name="Reinberg D."/>
            <person name="Ronne H."/>
            <person name="Sadowski I."/>
            <person name="Sakurai H."/>
            <person name="Sipiczki M."/>
            <person name="Sternberg P.W."/>
            <person name="Stillman D.J."/>
            <person name="Strich R."/>
            <person name="Struhl K."/>
            <person name="Svejstrup J.Q."/>
            <person name="Tuck S."/>
            <person name="Winston F."/>
            <person name="Roeder R.G."/>
            <person name="Kornberg R.D."/>
        </authorList>
    </citation>
    <scope>NOMENCLATURE</scope>
</reference>
<reference key="11">
    <citation type="journal article" date="2004" name="Nucleic Acids Res.">
        <title>A high resolution protein interaction map of the yeast Mediator complex.</title>
        <authorList>
            <person name="Guglielmi B."/>
            <person name="van Berkum N.L."/>
            <person name="Klapholz B."/>
            <person name="Bijma T."/>
            <person name="Boube M."/>
            <person name="Boschiero C."/>
            <person name="Bourbon H.-M."/>
            <person name="Holstege F.C.P."/>
            <person name="Werner M."/>
        </authorList>
    </citation>
    <scope>STRUCTURE OF THE MEDIATOR COMPLEX</scope>
</reference>
<reference key="12">
    <citation type="journal article" date="2005" name="J. Biol. Chem.">
        <title>Preponderance of free mediator in the yeast Saccharomyces cerevisiae.</title>
        <authorList>
            <person name="Takagi Y."/>
            <person name="Chadick J.Z."/>
            <person name="Davis J.A."/>
            <person name="Asturias F.J."/>
        </authorList>
    </citation>
    <scope>CHARACTERIZATION OF THE MEDIATOR COMPLEX</scope>
</reference>
<reference key="13">
    <citation type="journal article" date="2005" name="J. Biol. Chem.">
        <title>Mediator and TFIIH govern carboxyl-terminal domain-dependent transcription in yeast extracts.</title>
        <authorList>
            <person name="Nair D."/>
            <person name="Kim Y."/>
            <person name="Myers L.C."/>
        </authorList>
    </citation>
    <scope>FUNCTION OF THE MEDIATOR COMPLEX</scope>
</reference>
<reference key="14">
    <citation type="journal article" date="2006" name="J. Biol. Chem.">
        <title>Mediator as a general transcription factor.</title>
        <authorList>
            <person name="Takagi Y."/>
            <person name="Kornberg R.D."/>
        </authorList>
    </citation>
    <scope>FUNCTION OF THE MEDIATOR COMPLEX</scope>
</reference>
<reference key="15">
    <citation type="journal article" date="2006" name="Mol. Cell">
        <title>Genome-wide location of the coactivator mediator: binding without activation and transient Cdk8 interaction on DNA.</title>
        <authorList>
            <person name="Andrau J.-C."/>
            <person name="van de Pasch L."/>
            <person name="Lijnzaad P."/>
            <person name="Bijma T."/>
            <person name="Koerkamp M.G."/>
            <person name="van de Peppel J."/>
            <person name="Werner M."/>
            <person name="Holstege F.C.P."/>
        </authorList>
    </citation>
    <scope>SUBCELLULAR LOCATION</scope>
</reference>
<reference key="16">
    <citation type="journal article" date="2007" name="J. Biol. Chem.">
        <title>Med19(Rox3) regulates intermodule interactions in the Saccharomyces cerevisiae mediator complex.</title>
        <authorList>
            <person name="Baidoobonso S.M."/>
            <person name="Guidi B.W."/>
            <person name="Myers L.C."/>
        </authorList>
    </citation>
    <scope>CHARACTERIZATION OF THE MEDIATOR COMPLEX</scope>
    <scope>INTERACTION OF THE MEDIATOR COMPLEX WITH RNA POLYMERASE II</scope>
</reference>
<reference key="17">
    <citation type="journal article" date="2002" name="Mol. Cell">
        <title>Structure of the yeast RNA polymerase II holoenzyme: mediator conformation and polymerase interaction.</title>
        <authorList>
            <person name="Davis J.A."/>
            <person name="Takagi Y."/>
            <person name="Kornberg R.D."/>
            <person name="Asturias F.J."/>
        </authorList>
    </citation>
    <scope>ELECTRON MICROSCOPY OF MEDIATOR COMPLEX IN COMPLEX WITH RNA POLYMERASE II</scope>
</reference>
<reference key="18">
    <citation type="journal article" date="2005" name="J. Biol. Chem.">
        <title>A conserved mediator hinge revealed in the structure of the MED7-MED21 (Med7-Srb7) heterodimer.</title>
        <authorList>
            <person name="Baumli S."/>
            <person name="Hoeppner S."/>
            <person name="Cramer P."/>
        </authorList>
    </citation>
    <scope>X-RAY CRYSTALLOGRAPHY (3.0 ANGSTROMS) OF 102-205 IN COMPLEX WITH SRB7</scope>
</reference>
<organism>
    <name type="scientific">Saccharomyces cerevisiae (strain ATCC 204508 / S288c)</name>
    <name type="common">Baker's yeast</name>
    <dbReference type="NCBI Taxonomy" id="559292"/>
    <lineage>
        <taxon>Eukaryota</taxon>
        <taxon>Fungi</taxon>
        <taxon>Dikarya</taxon>
        <taxon>Ascomycota</taxon>
        <taxon>Saccharomycotina</taxon>
        <taxon>Saccharomycetes</taxon>
        <taxon>Saccharomycetales</taxon>
        <taxon>Saccharomycetaceae</taxon>
        <taxon>Saccharomyces</taxon>
    </lineage>
</organism>
<feature type="chain" id="PRO_0000096393" description="Mediator of RNA polymerase II transcription subunit 7">
    <location>
        <begin position="1"/>
        <end position="222"/>
    </location>
</feature>
<feature type="region of interest" description="Disordered" evidence="1">
    <location>
        <begin position="34"/>
        <end position="55"/>
    </location>
</feature>
<feature type="compositionally biased region" description="Polar residues" evidence="1">
    <location>
        <begin position="42"/>
        <end position="53"/>
    </location>
</feature>
<feature type="helix" evidence="12">
    <location>
        <begin position="18"/>
        <end position="22"/>
    </location>
</feature>
<feature type="helix" evidence="12">
    <location>
        <begin position="25"/>
        <end position="39"/>
    </location>
</feature>
<feature type="helix" evidence="12">
    <location>
        <begin position="61"/>
        <end position="65"/>
    </location>
</feature>
<feature type="helix" evidence="12">
    <location>
        <begin position="74"/>
        <end position="76"/>
    </location>
</feature>
<feature type="helix" evidence="11">
    <location>
        <begin position="112"/>
        <end position="133"/>
    </location>
</feature>
<feature type="strand" evidence="11">
    <location>
        <begin position="135"/>
        <end position="137"/>
    </location>
</feature>
<feature type="helix" evidence="11">
    <location>
        <begin position="141"/>
        <end position="143"/>
    </location>
</feature>
<feature type="helix" evidence="11">
    <location>
        <begin position="144"/>
        <end position="164"/>
    </location>
</feature>
<feature type="helix" evidence="11">
    <location>
        <begin position="166"/>
        <end position="203"/>
    </location>
</feature>